<accession>A6LWN4</accession>
<name>PAND_CLOB8</name>
<proteinExistence type="inferred from homology"/>
<reference key="1">
    <citation type="submission" date="2007-06" db="EMBL/GenBank/DDBJ databases">
        <title>Complete sequence of Clostridium beijerinckii NCIMB 8052.</title>
        <authorList>
            <consortium name="US DOE Joint Genome Institute"/>
            <person name="Copeland A."/>
            <person name="Lucas S."/>
            <person name="Lapidus A."/>
            <person name="Barry K."/>
            <person name="Detter J.C."/>
            <person name="Glavina del Rio T."/>
            <person name="Hammon N."/>
            <person name="Israni S."/>
            <person name="Dalin E."/>
            <person name="Tice H."/>
            <person name="Pitluck S."/>
            <person name="Sims D."/>
            <person name="Brettin T."/>
            <person name="Bruce D."/>
            <person name="Tapia R."/>
            <person name="Brainard J."/>
            <person name="Schmutz J."/>
            <person name="Larimer F."/>
            <person name="Land M."/>
            <person name="Hauser L."/>
            <person name="Kyrpides N."/>
            <person name="Mikhailova N."/>
            <person name="Bennet G."/>
            <person name="Cann I."/>
            <person name="Chen J.-S."/>
            <person name="Contreras A.L."/>
            <person name="Jones D."/>
            <person name="Kashket E."/>
            <person name="Mitchell W."/>
            <person name="Stoddard S."/>
            <person name="Schwarz W."/>
            <person name="Qureshi N."/>
            <person name="Young M."/>
            <person name="Shi Z."/>
            <person name="Ezeji T."/>
            <person name="White B."/>
            <person name="Blaschek H."/>
            <person name="Richardson P."/>
        </authorList>
    </citation>
    <scope>NUCLEOTIDE SEQUENCE [LARGE SCALE GENOMIC DNA]</scope>
    <source>
        <strain>ATCC 51743 / NCIMB 8052</strain>
    </source>
</reference>
<keyword id="KW-0068">Autocatalytic cleavage</keyword>
<keyword id="KW-0963">Cytoplasm</keyword>
<keyword id="KW-0210">Decarboxylase</keyword>
<keyword id="KW-0456">Lyase</keyword>
<keyword id="KW-0566">Pantothenate biosynthesis</keyword>
<keyword id="KW-0670">Pyruvate</keyword>
<keyword id="KW-0704">Schiff base</keyword>
<keyword id="KW-0865">Zymogen</keyword>
<protein>
    <recommendedName>
        <fullName evidence="1">Aspartate 1-decarboxylase</fullName>
        <ecNumber evidence="1">4.1.1.11</ecNumber>
    </recommendedName>
    <alternativeName>
        <fullName evidence="1">Aspartate alpha-decarboxylase</fullName>
    </alternativeName>
    <component>
        <recommendedName>
            <fullName evidence="1">Aspartate 1-decarboxylase beta chain</fullName>
        </recommendedName>
    </component>
    <component>
        <recommendedName>
            <fullName evidence="1">Aspartate 1-decarboxylase alpha chain</fullName>
        </recommendedName>
    </component>
</protein>
<dbReference type="EC" id="4.1.1.11" evidence="1"/>
<dbReference type="EMBL" id="CP000721">
    <property type="protein sequence ID" value="ABR34764.1"/>
    <property type="molecule type" value="Genomic_DNA"/>
</dbReference>
<dbReference type="RefSeq" id="WP_012058819.1">
    <property type="nucleotide sequence ID" value="NC_009617.1"/>
</dbReference>
<dbReference type="SMR" id="A6LWN4"/>
<dbReference type="GeneID" id="66345536"/>
<dbReference type="KEGG" id="cbe:Cbei_2608"/>
<dbReference type="eggNOG" id="COG0853">
    <property type="taxonomic scope" value="Bacteria"/>
</dbReference>
<dbReference type="HOGENOM" id="CLU_115305_2_0_9"/>
<dbReference type="UniPathway" id="UPA00028">
    <property type="reaction ID" value="UER00002"/>
</dbReference>
<dbReference type="Proteomes" id="UP000000565">
    <property type="component" value="Chromosome"/>
</dbReference>
<dbReference type="GO" id="GO:0005829">
    <property type="term" value="C:cytosol"/>
    <property type="evidence" value="ECO:0007669"/>
    <property type="project" value="TreeGrafter"/>
</dbReference>
<dbReference type="GO" id="GO:0004068">
    <property type="term" value="F:aspartate 1-decarboxylase activity"/>
    <property type="evidence" value="ECO:0007669"/>
    <property type="project" value="UniProtKB-UniRule"/>
</dbReference>
<dbReference type="GO" id="GO:0006523">
    <property type="term" value="P:alanine biosynthetic process"/>
    <property type="evidence" value="ECO:0007669"/>
    <property type="project" value="InterPro"/>
</dbReference>
<dbReference type="GO" id="GO:0015940">
    <property type="term" value="P:pantothenate biosynthetic process"/>
    <property type="evidence" value="ECO:0007669"/>
    <property type="project" value="UniProtKB-UniRule"/>
</dbReference>
<dbReference type="CDD" id="cd06919">
    <property type="entry name" value="Asp_decarbox"/>
    <property type="match status" value="1"/>
</dbReference>
<dbReference type="Gene3D" id="2.40.40.20">
    <property type="match status" value="1"/>
</dbReference>
<dbReference type="HAMAP" id="MF_00446">
    <property type="entry name" value="PanD"/>
    <property type="match status" value="1"/>
</dbReference>
<dbReference type="InterPro" id="IPR009010">
    <property type="entry name" value="Asp_de-COase-like_dom_sf"/>
</dbReference>
<dbReference type="InterPro" id="IPR003190">
    <property type="entry name" value="Asp_decarbox"/>
</dbReference>
<dbReference type="NCBIfam" id="TIGR00223">
    <property type="entry name" value="panD"/>
    <property type="match status" value="1"/>
</dbReference>
<dbReference type="PANTHER" id="PTHR21012">
    <property type="entry name" value="ASPARTATE 1-DECARBOXYLASE"/>
    <property type="match status" value="1"/>
</dbReference>
<dbReference type="PANTHER" id="PTHR21012:SF0">
    <property type="entry name" value="ASPARTATE 1-DECARBOXYLASE"/>
    <property type="match status" value="1"/>
</dbReference>
<dbReference type="Pfam" id="PF02261">
    <property type="entry name" value="Asp_decarbox"/>
    <property type="match status" value="1"/>
</dbReference>
<dbReference type="PIRSF" id="PIRSF006246">
    <property type="entry name" value="Asp_decarbox"/>
    <property type="match status" value="1"/>
</dbReference>
<dbReference type="SUPFAM" id="SSF50692">
    <property type="entry name" value="ADC-like"/>
    <property type="match status" value="1"/>
</dbReference>
<feature type="chain" id="PRO_1000080914" description="Aspartate 1-decarboxylase beta chain" evidence="1">
    <location>
        <begin position="1"/>
        <end position="24"/>
    </location>
</feature>
<feature type="chain" id="PRO_1000080915" description="Aspartate 1-decarboxylase alpha chain" evidence="1">
    <location>
        <begin position="25"/>
        <end position="124"/>
    </location>
</feature>
<feature type="active site" description="Schiff-base intermediate with substrate; via pyruvic acid" evidence="1">
    <location>
        <position position="25"/>
    </location>
</feature>
<feature type="active site" description="Proton donor" evidence="1">
    <location>
        <position position="58"/>
    </location>
</feature>
<feature type="binding site" evidence="1">
    <location>
        <position position="57"/>
    </location>
    <ligand>
        <name>substrate</name>
    </ligand>
</feature>
<feature type="binding site" evidence="1">
    <location>
        <begin position="73"/>
        <end position="75"/>
    </location>
    <ligand>
        <name>substrate</name>
    </ligand>
</feature>
<feature type="modified residue" description="Pyruvic acid (Ser)" evidence="1">
    <location>
        <position position="25"/>
    </location>
</feature>
<evidence type="ECO:0000255" key="1">
    <source>
        <dbReference type="HAMAP-Rule" id="MF_00446"/>
    </source>
</evidence>
<organism>
    <name type="scientific">Clostridium beijerinckii (strain ATCC 51743 / NCIMB 8052)</name>
    <name type="common">Clostridium acetobutylicum</name>
    <dbReference type="NCBI Taxonomy" id="290402"/>
    <lineage>
        <taxon>Bacteria</taxon>
        <taxon>Bacillati</taxon>
        <taxon>Bacillota</taxon>
        <taxon>Clostridia</taxon>
        <taxon>Eubacteriales</taxon>
        <taxon>Clostridiaceae</taxon>
        <taxon>Clostridium</taxon>
    </lineage>
</organism>
<comment type="function">
    <text evidence="1">Catalyzes the pyruvoyl-dependent decarboxylation of aspartate to produce beta-alanine.</text>
</comment>
<comment type="catalytic activity">
    <reaction evidence="1">
        <text>L-aspartate + H(+) = beta-alanine + CO2</text>
        <dbReference type="Rhea" id="RHEA:19497"/>
        <dbReference type="ChEBI" id="CHEBI:15378"/>
        <dbReference type="ChEBI" id="CHEBI:16526"/>
        <dbReference type="ChEBI" id="CHEBI:29991"/>
        <dbReference type="ChEBI" id="CHEBI:57966"/>
        <dbReference type="EC" id="4.1.1.11"/>
    </reaction>
</comment>
<comment type="cofactor">
    <cofactor evidence="1">
        <name>pyruvate</name>
        <dbReference type="ChEBI" id="CHEBI:15361"/>
    </cofactor>
    <text evidence="1">Binds 1 pyruvoyl group covalently per subunit.</text>
</comment>
<comment type="pathway">
    <text evidence="1">Cofactor biosynthesis; (R)-pantothenate biosynthesis; beta-alanine from L-aspartate: step 1/1.</text>
</comment>
<comment type="subunit">
    <text evidence="1">Heterooctamer of four alpha and four beta subunits.</text>
</comment>
<comment type="subcellular location">
    <subcellularLocation>
        <location evidence="1">Cytoplasm</location>
    </subcellularLocation>
</comment>
<comment type="PTM">
    <text evidence="1">Is synthesized initially as an inactive proenzyme, which is activated by self-cleavage at a specific serine bond to produce a beta-subunit with a hydroxyl group at its C-terminus and an alpha-subunit with a pyruvoyl group at its N-terminus.</text>
</comment>
<comment type="similarity">
    <text evidence="1">Belongs to the PanD family.</text>
</comment>
<gene>
    <name evidence="1" type="primary">panD</name>
    <name type="ordered locus">Cbei_2608</name>
</gene>
<sequence>MILTMLKGKIHRATVTQAELNYVGSITIDKTLMEAAGILENEKVQIVDINNGARLETYVIPGKRESGVICLNGAAARLVQPGDKVIIIAYAQMNEDEARKYKPSVVFMNDDNTIKEITNYESNE</sequence>